<gene>
    <name type="primary">rnz</name>
    <name type="ordered locus">DR_0270</name>
</gene>
<accession>Q9RXP0</accession>
<sequence>MLSAAVLGQPTRDNALWVTADSGKGQTRLLLDCGGHTLDTLPLHEVQATDHLLFSHLHMDHIAGFDDFFRVNFDRQSRENHLWGPPGAARILAHRLQGYWWNHAPQLRATWRIHEVDDAAVHTWRFELHEAFEIAHDEGRTPRTGPLIETPHLRVDAVPLQHQGPCLGYVLREPGRVNVDPAGLTRLDLTPGPWLAALKAGAEEVEIAGERRPAAPLRAELLREEAGDSLAYLTDFLLDEAELARLAPLLAGVRTLYLEAQYAPADADLAARNHHTTTEQGATLAARAGAQELVLLHLSRRYREADWREMLRAAQAIFPAARFAESWLRGT</sequence>
<dbReference type="EC" id="3.1.26.11"/>
<dbReference type="EMBL" id="AE000513">
    <property type="protein sequence ID" value="AAF09851.1"/>
    <property type="molecule type" value="Genomic_DNA"/>
</dbReference>
<dbReference type="PIR" id="G75540">
    <property type="entry name" value="G75540"/>
</dbReference>
<dbReference type="RefSeq" id="NP_293993.1">
    <property type="nucleotide sequence ID" value="NC_001263.1"/>
</dbReference>
<dbReference type="RefSeq" id="WP_010886915.1">
    <property type="nucleotide sequence ID" value="NC_001263.1"/>
</dbReference>
<dbReference type="SMR" id="Q9RXP0"/>
<dbReference type="FunCoup" id="Q9RXP0">
    <property type="interactions" value="313"/>
</dbReference>
<dbReference type="STRING" id="243230.DR_0270"/>
<dbReference type="PaxDb" id="243230-DR_0270"/>
<dbReference type="EnsemblBacteria" id="AAF09851">
    <property type="protein sequence ID" value="AAF09851"/>
    <property type="gene ID" value="DR_0270"/>
</dbReference>
<dbReference type="GeneID" id="69516502"/>
<dbReference type="KEGG" id="dra:DR_0270"/>
<dbReference type="PATRIC" id="fig|243230.17.peg.435"/>
<dbReference type="eggNOG" id="COG1234">
    <property type="taxonomic scope" value="Bacteria"/>
</dbReference>
<dbReference type="HOGENOM" id="CLU_823444_0_0_0"/>
<dbReference type="InParanoid" id="Q9RXP0"/>
<dbReference type="OrthoDB" id="9800940at2"/>
<dbReference type="Proteomes" id="UP000002524">
    <property type="component" value="Chromosome 1"/>
</dbReference>
<dbReference type="GO" id="GO:0042781">
    <property type="term" value="F:3'-tRNA processing endoribonuclease activity"/>
    <property type="evidence" value="ECO:0000318"/>
    <property type="project" value="GO_Central"/>
</dbReference>
<dbReference type="GO" id="GO:0046872">
    <property type="term" value="F:metal ion binding"/>
    <property type="evidence" value="ECO:0007669"/>
    <property type="project" value="UniProtKB-KW"/>
</dbReference>
<dbReference type="Gene3D" id="3.60.15.10">
    <property type="entry name" value="Ribonuclease Z/Hydroxyacylglutathione hydrolase-like"/>
    <property type="match status" value="1"/>
</dbReference>
<dbReference type="InterPro" id="IPR001279">
    <property type="entry name" value="Metallo-B-lactamas"/>
</dbReference>
<dbReference type="InterPro" id="IPR036866">
    <property type="entry name" value="RibonucZ/Hydroxyglut_hydro"/>
</dbReference>
<dbReference type="NCBIfam" id="NF002558">
    <property type="entry name" value="PRK02126.1"/>
    <property type="match status" value="1"/>
</dbReference>
<dbReference type="PANTHER" id="PTHR46018">
    <property type="entry name" value="ZINC PHOSPHODIESTERASE ELAC PROTEIN 1"/>
    <property type="match status" value="1"/>
</dbReference>
<dbReference type="PANTHER" id="PTHR46018:SF2">
    <property type="entry name" value="ZINC PHOSPHODIESTERASE ELAC PROTEIN 1"/>
    <property type="match status" value="1"/>
</dbReference>
<dbReference type="Pfam" id="PF12706">
    <property type="entry name" value="Lactamase_B_2"/>
    <property type="match status" value="1"/>
</dbReference>
<dbReference type="SUPFAM" id="SSF56281">
    <property type="entry name" value="Metallo-hydrolase/oxidoreductase"/>
    <property type="match status" value="1"/>
</dbReference>
<keyword id="KW-0255">Endonuclease</keyword>
<keyword id="KW-0378">Hydrolase</keyword>
<keyword id="KW-0479">Metal-binding</keyword>
<keyword id="KW-0540">Nuclease</keyword>
<keyword id="KW-1185">Reference proteome</keyword>
<keyword id="KW-0819">tRNA processing</keyword>
<keyword id="KW-0862">Zinc</keyword>
<proteinExistence type="inferred from homology"/>
<protein>
    <recommendedName>
        <fullName>Ribonuclease Z</fullName>
        <shortName>RNase Z</shortName>
        <ecNumber>3.1.26.11</ecNumber>
    </recommendedName>
    <alternativeName>
        <fullName>tRNA 3 endonuclease</fullName>
    </alternativeName>
    <alternativeName>
        <fullName>tRNase Z</fullName>
    </alternativeName>
</protein>
<organism>
    <name type="scientific">Deinococcus radiodurans (strain ATCC 13939 / DSM 20539 / JCM 16871 / CCUG 27074 / LMG 4051 / NBRC 15346 / NCIMB 9279 / VKM B-1422 / R1)</name>
    <dbReference type="NCBI Taxonomy" id="243230"/>
    <lineage>
        <taxon>Bacteria</taxon>
        <taxon>Thermotogati</taxon>
        <taxon>Deinococcota</taxon>
        <taxon>Deinococci</taxon>
        <taxon>Deinococcales</taxon>
        <taxon>Deinococcaceae</taxon>
        <taxon>Deinococcus</taxon>
    </lineage>
</organism>
<reference key="1">
    <citation type="journal article" date="1999" name="Science">
        <title>Genome sequence of the radioresistant bacterium Deinococcus radiodurans R1.</title>
        <authorList>
            <person name="White O."/>
            <person name="Eisen J.A."/>
            <person name="Heidelberg J.F."/>
            <person name="Hickey E.K."/>
            <person name="Peterson J.D."/>
            <person name="Dodson R.J."/>
            <person name="Haft D.H."/>
            <person name="Gwinn M.L."/>
            <person name="Nelson W.C."/>
            <person name="Richardson D.L."/>
            <person name="Moffat K.S."/>
            <person name="Qin H."/>
            <person name="Jiang L."/>
            <person name="Pamphile W."/>
            <person name="Crosby M."/>
            <person name="Shen M."/>
            <person name="Vamathevan J.J."/>
            <person name="Lam P."/>
            <person name="McDonald L.A."/>
            <person name="Utterback T.R."/>
            <person name="Zalewski C."/>
            <person name="Makarova K.S."/>
            <person name="Aravind L."/>
            <person name="Daly M.J."/>
            <person name="Minton K.W."/>
            <person name="Fleischmann R.D."/>
            <person name="Ketchum K.A."/>
            <person name="Nelson K.E."/>
            <person name="Salzberg S.L."/>
            <person name="Smith H.O."/>
            <person name="Venter J.C."/>
            <person name="Fraser C.M."/>
        </authorList>
    </citation>
    <scope>NUCLEOTIDE SEQUENCE [LARGE SCALE GENOMIC DNA]</scope>
    <source>
        <strain>ATCC 13939 / DSM 20539 / JCM 16871 / CCUG 27074 / LMG 4051 / NBRC 15346 / NCIMB 9279 / VKM B-1422 / R1</strain>
    </source>
</reference>
<name>RNZ_DEIRA</name>
<comment type="function">
    <text evidence="1">Zinc phosphodiesterase, which displays some tRNA 3'-processing endonuclease activity. Probably involved in tRNA maturation, by removing a 3'-trailer from precursor tRNA (By similarity).</text>
</comment>
<comment type="catalytic activity">
    <reaction>
        <text>Endonucleolytic cleavage of RNA, removing extra 3' nucleotides from tRNA precursor, generating 3' termini of tRNAs. A 3'-hydroxy group is left at the tRNA terminus and a 5'-phosphoryl group is left at the trailer molecule.</text>
        <dbReference type="EC" id="3.1.26.11"/>
    </reaction>
</comment>
<comment type="cofactor">
    <cofactor evidence="1">
        <name>Zn(2+)</name>
        <dbReference type="ChEBI" id="CHEBI:29105"/>
    </cofactor>
    <text evidence="1">Binds 2 Zn(2+) ions.</text>
</comment>
<comment type="subunit">
    <text evidence="1">Homodimer.</text>
</comment>
<comment type="similarity">
    <text evidence="3">Belongs to the RNase Z family.</text>
</comment>
<evidence type="ECO:0000250" key="1"/>
<evidence type="ECO:0000255" key="2"/>
<evidence type="ECO:0000305" key="3"/>
<feature type="chain" id="PRO_0000155862" description="Ribonuclease Z">
    <location>
        <begin position="1"/>
        <end position="331"/>
    </location>
</feature>
<feature type="active site" description="Proton acceptor" evidence="2">
    <location>
        <position position="60"/>
    </location>
</feature>
<feature type="binding site" evidence="1">
    <location>
        <position position="56"/>
    </location>
    <ligand>
        <name>Zn(2+)</name>
        <dbReference type="ChEBI" id="CHEBI:29105"/>
        <label>1</label>
        <note>catalytic</note>
    </ligand>
</feature>
<feature type="binding site" evidence="1">
    <location>
        <position position="58"/>
    </location>
    <ligand>
        <name>Zn(2+)</name>
        <dbReference type="ChEBI" id="CHEBI:29105"/>
        <label>1</label>
        <note>catalytic</note>
    </ligand>
</feature>
<feature type="binding site" evidence="1">
    <location>
        <position position="60"/>
    </location>
    <ligand>
        <name>Zn(2+)</name>
        <dbReference type="ChEBI" id="CHEBI:29105"/>
        <label>2</label>
        <note>catalytic</note>
    </ligand>
</feature>
<feature type="binding site" evidence="1">
    <location>
        <position position="61"/>
    </location>
    <ligand>
        <name>Zn(2+)</name>
        <dbReference type="ChEBI" id="CHEBI:29105"/>
        <label>2</label>
        <note>catalytic</note>
    </ligand>
</feature>
<feature type="binding site" evidence="1">
    <location>
        <position position="162"/>
    </location>
    <ligand>
        <name>Zn(2+)</name>
        <dbReference type="ChEBI" id="CHEBI:29105"/>
        <label>1</label>
        <note>catalytic</note>
    </ligand>
</feature>
<feature type="binding site" evidence="1">
    <location>
        <position position="235"/>
    </location>
    <ligand>
        <name>Zn(2+)</name>
        <dbReference type="ChEBI" id="CHEBI:29105"/>
        <label>1</label>
        <note>catalytic</note>
    </ligand>
</feature>
<feature type="binding site" evidence="1">
    <location>
        <position position="235"/>
    </location>
    <ligand>
        <name>Zn(2+)</name>
        <dbReference type="ChEBI" id="CHEBI:29105"/>
        <label>2</label>
        <note>catalytic</note>
    </ligand>
</feature>
<feature type="binding site" evidence="1">
    <location>
        <position position="297"/>
    </location>
    <ligand>
        <name>Zn(2+)</name>
        <dbReference type="ChEBI" id="CHEBI:29105"/>
        <label>2</label>
        <note>catalytic</note>
    </ligand>
</feature>